<protein>
    <recommendedName>
        <fullName>Eukaryotic translation initiation factor 3 subunit C-like protein</fullName>
    </recommendedName>
</protein>
<comment type="function">
    <text evidence="2">Component of the eukaryotic translation initiation factor 3 (eIF-3) complex, which is required for several steps in the initiation of protein synthesis. The eIF-3 complex associates with the 40S ribosome and facilitates the recruitment of eIF-1, eIF-1A, eIF-2:GTP:methionyl-tRNAi and eIF-5 to form the 43S pre-initiation complex (43S PIC). The eIF-3 complex stimulates mRNA recruitment to the 43S PIC and scanning of the mRNA for AUG recognition. The eIF-3 complex is also required for disassembly and recycling of post-termination ribosomal complexes and subsequently prevents premature joining of the 40S and 60S ribosomal subunits prior to initiation. The eIF-3 complex specifically targets and initiates translation of a subset of mRNAs involved in cell proliferation, including cell cycling, differentiation and apoptosis, and uses different modes of RNA stem-loop binding to exert either translational activation or repression.</text>
</comment>
<comment type="subunit">
    <text evidence="2">Component of the eukaryotic translation initiation factor 3 (eIF-3) complex, which is composed of 13 subunits: EIF3A, EIF3B, EIF3C, EIF3D, EIF3E, EIF3F, EIF3G, EIF3H, EIF3I, EIF3J, EIF3K, EIF3L and EIF3M. The eIF-3 complex appears to include 3 stable modules: module A is composed of EIF3A, EIF3B, EIF3G and EIF3I; module B is composed of EIF3F, EIF3H, and EIF3M; and module C is composed of EIF3C, EIF3D, EIF3E, EIF3K and EIF3L. EIF3C of module C binds EIF3B of module A and EIF3H of module B, thereby linking the three modules. EIF3J is a labile subunit that binds to the eIF-3 complex via EIF3B. The eIF-3 complex interacts with RPS6KB1 under conditions of nutrient depletion. Mitogenic stimulation leads to binding and activation of a complex composed of MTOR and RPTOR, leading to phosphorylation and release of RPS6KB1 and binding of EIF4B to eIF-3 (By similarity).</text>
</comment>
<comment type="interaction">
    <interactant intactId="EBI-8456517">
        <id>B5ME19</id>
    </interactant>
    <interactant intactId="EBI-709735">
        <id>O15372</id>
        <label>EIF3H</label>
    </interactant>
    <organismsDiffer>false</organismsDiffer>
    <experiments>3</experiments>
</comment>
<comment type="subcellular location">
    <subcellularLocation>
        <location evidence="2">Cytoplasm</location>
    </subcellularLocation>
</comment>
<comment type="PTM">
    <text evidence="2">Phosphorylated. Phosphorylation is enhanced upon serum stimulation (By similarity).</text>
</comment>
<comment type="similarity">
    <text evidence="5">Belongs to the eIF-3 subunit C family.</text>
</comment>
<accession>B5ME19</accession>
<gene>
    <name type="primary">EIF3CL</name>
</gene>
<dbReference type="EMBL" id="AC138894">
    <property type="status" value="NOT_ANNOTATED_CDS"/>
    <property type="molecule type" value="Genomic_DNA"/>
</dbReference>
<dbReference type="CCDS" id="CCDS42136.1"/>
<dbReference type="RefSeq" id="NP_001093131.1">
    <property type="nucleotide sequence ID" value="NM_001099661.2"/>
</dbReference>
<dbReference type="RefSeq" id="NP_001304785.1">
    <property type="nucleotide sequence ID" value="NM_001317856.1"/>
</dbReference>
<dbReference type="RefSeq" id="NP_001304786.1">
    <property type="nucleotide sequence ID" value="NM_001317857.2"/>
</dbReference>
<dbReference type="RefSeq" id="XP_047290514.1">
    <property type="nucleotide sequence ID" value="XM_047434558.1"/>
</dbReference>
<dbReference type="SMR" id="B5ME19"/>
<dbReference type="BioGRID" id="609110">
    <property type="interactions" value="104"/>
</dbReference>
<dbReference type="FunCoup" id="B5ME19">
    <property type="interactions" value="407"/>
</dbReference>
<dbReference type="IntAct" id="B5ME19">
    <property type="interactions" value="35"/>
</dbReference>
<dbReference type="MINT" id="B5ME19"/>
<dbReference type="STRING" id="9606.ENSP00000370258"/>
<dbReference type="GlyGen" id="B5ME19">
    <property type="glycosylation" value="1 site, 1 O-linked glycan (1 site)"/>
</dbReference>
<dbReference type="iPTMnet" id="B5ME19"/>
<dbReference type="MetOSite" id="B5ME19"/>
<dbReference type="PhosphoSitePlus" id="B5ME19"/>
<dbReference type="SwissPalm" id="B5ME19"/>
<dbReference type="BioMuta" id="EIF3CL"/>
<dbReference type="jPOST" id="B5ME19"/>
<dbReference type="MassIVE" id="B5ME19"/>
<dbReference type="PaxDb" id="9606-ENSP00000370258"/>
<dbReference type="PeptideAtlas" id="B5ME19"/>
<dbReference type="ProteomicsDB" id="6205"/>
<dbReference type="Pumba" id="B5ME19"/>
<dbReference type="Antibodypedia" id="67070">
    <property type="antibodies" value="12 antibodies from 3 providers"/>
</dbReference>
<dbReference type="DNASU" id="728689"/>
<dbReference type="Ensembl" id="ENST00000380876.5">
    <property type="protein sequence ID" value="ENSP00000370258.5"/>
    <property type="gene ID" value="ENSG00000205609.13"/>
</dbReference>
<dbReference type="Ensembl" id="ENST00000398944.7">
    <property type="protein sequence ID" value="ENSP00000381917.3"/>
    <property type="gene ID" value="ENSG00000205609.13"/>
</dbReference>
<dbReference type="GeneID" id="728689"/>
<dbReference type="KEGG" id="hsa:728689"/>
<dbReference type="MANE-Select" id="ENST00000380876.5">
    <property type="protein sequence ID" value="ENSP00000370258.5"/>
    <property type="RefSeq nucleotide sequence ID" value="NM_001317857.2"/>
    <property type="RefSeq protein sequence ID" value="NP_001304786.1"/>
</dbReference>
<dbReference type="UCSC" id="uc002dpi.6">
    <property type="organism name" value="human"/>
</dbReference>
<dbReference type="AGR" id="HGNC:26347"/>
<dbReference type="CTD" id="728689"/>
<dbReference type="DisGeNET" id="728689"/>
<dbReference type="GeneCards" id="EIF3CL"/>
<dbReference type="HGNC" id="HGNC:26347">
    <property type="gene designation" value="EIF3CL"/>
</dbReference>
<dbReference type="HPA" id="ENSG00000205609">
    <property type="expression patterns" value="Low tissue specificity"/>
</dbReference>
<dbReference type="neXtProt" id="NX_B5ME19"/>
<dbReference type="OpenTargets" id="ENSG00000205609"/>
<dbReference type="PharmGKB" id="PA162384693"/>
<dbReference type="VEuPathDB" id="HostDB:ENSG00000205609"/>
<dbReference type="eggNOG" id="KOG1076">
    <property type="taxonomic scope" value="Eukaryota"/>
</dbReference>
<dbReference type="GeneTree" id="ENSGT00390000017900"/>
<dbReference type="HOGENOM" id="CLU_004304_0_0_1"/>
<dbReference type="InParanoid" id="B5ME19"/>
<dbReference type="OMA" id="CQIEVLV"/>
<dbReference type="OrthoDB" id="29647at2759"/>
<dbReference type="PAN-GO" id="B5ME19">
    <property type="GO annotations" value="4 GO annotations based on evolutionary models"/>
</dbReference>
<dbReference type="PhylomeDB" id="B5ME19"/>
<dbReference type="TreeFam" id="TF101520"/>
<dbReference type="PathwayCommons" id="B5ME19"/>
<dbReference type="SignaLink" id="B5ME19"/>
<dbReference type="BioGRID-ORCS" id="728689">
    <property type="hits" value="687 hits in 1024 CRISPR screens"/>
</dbReference>
<dbReference type="ChiTaRS" id="EIF3CL">
    <property type="organism name" value="human"/>
</dbReference>
<dbReference type="GenomeRNAi" id="728689"/>
<dbReference type="Pharos" id="B5ME19">
    <property type="development level" value="Tdark"/>
</dbReference>
<dbReference type="PRO" id="PR:B5ME19"/>
<dbReference type="Proteomes" id="UP000005640">
    <property type="component" value="Chromosome 16"/>
</dbReference>
<dbReference type="RNAct" id="B5ME19">
    <property type="molecule type" value="protein"/>
</dbReference>
<dbReference type="Bgee" id="ENSG00000205609">
    <property type="expression patterns" value="Expressed in apex of heart and 97 other cell types or tissues"/>
</dbReference>
<dbReference type="GO" id="GO:0016282">
    <property type="term" value="C:eukaryotic 43S preinitiation complex"/>
    <property type="evidence" value="ECO:0007669"/>
    <property type="project" value="UniProtKB-UniRule"/>
</dbReference>
<dbReference type="GO" id="GO:0033290">
    <property type="term" value="C:eukaryotic 48S preinitiation complex"/>
    <property type="evidence" value="ECO:0007669"/>
    <property type="project" value="UniProtKB-UniRule"/>
</dbReference>
<dbReference type="GO" id="GO:0005852">
    <property type="term" value="C:eukaryotic translation initiation factor 3 complex"/>
    <property type="evidence" value="ECO:0000318"/>
    <property type="project" value="GO_Central"/>
</dbReference>
<dbReference type="GO" id="GO:0003723">
    <property type="term" value="F:RNA binding"/>
    <property type="evidence" value="ECO:0007669"/>
    <property type="project" value="InterPro"/>
</dbReference>
<dbReference type="GO" id="GO:0003743">
    <property type="term" value="F:translation initiation factor activity"/>
    <property type="evidence" value="ECO:0007669"/>
    <property type="project" value="UniProtKB-UniRule"/>
</dbReference>
<dbReference type="GO" id="GO:0031369">
    <property type="term" value="F:translation initiation factor binding"/>
    <property type="evidence" value="ECO:0000318"/>
    <property type="project" value="GO_Central"/>
</dbReference>
<dbReference type="GO" id="GO:0001732">
    <property type="term" value="P:formation of cytoplasmic translation initiation complex"/>
    <property type="evidence" value="ECO:0007669"/>
    <property type="project" value="UniProtKB-UniRule"/>
</dbReference>
<dbReference type="GO" id="GO:0006413">
    <property type="term" value="P:translational initiation"/>
    <property type="evidence" value="ECO:0000318"/>
    <property type="project" value="GO_Central"/>
</dbReference>
<dbReference type="FunFam" id="1.10.10.10:FF:000461">
    <property type="entry name" value="Eukaryotic translation initiation factor 3 subunit C"/>
    <property type="match status" value="1"/>
</dbReference>
<dbReference type="Gene3D" id="1.10.10.10">
    <property type="entry name" value="Winged helix-like DNA-binding domain superfamily/Winged helix DNA-binding domain"/>
    <property type="match status" value="1"/>
</dbReference>
<dbReference type="HAMAP" id="MF_03002">
    <property type="entry name" value="eIF3c"/>
    <property type="match status" value="1"/>
</dbReference>
<dbReference type="InterPro" id="IPR027516">
    <property type="entry name" value="EIF3C"/>
</dbReference>
<dbReference type="InterPro" id="IPR008905">
    <property type="entry name" value="EIF3C_N_dom"/>
</dbReference>
<dbReference type="InterPro" id="IPR000717">
    <property type="entry name" value="PCI_dom"/>
</dbReference>
<dbReference type="InterPro" id="IPR036388">
    <property type="entry name" value="WH-like_DNA-bd_sf"/>
</dbReference>
<dbReference type="InterPro" id="IPR036390">
    <property type="entry name" value="WH_DNA-bd_sf"/>
</dbReference>
<dbReference type="PANTHER" id="PTHR13937">
    <property type="entry name" value="EUKARYOTIC TRANSLATION INITATION FACTOR 3, SUBUNIT 8 EIF3S8 -RELATED"/>
    <property type="match status" value="1"/>
</dbReference>
<dbReference type="PANTHER" id="PTHR13937:SF0">
    <property type="entry name" value="EUKARYOTIC TRANSLATION INITIATION FACTOR 3 SUBUNIT C-RELATED"/>
    <property type="match status" value="1"/>
</dbReference>
<dbReference type="Pfam" id="PF05470">
    <property type="entry name" value="eIF-3c_N"/>
    <property type="match status" value="1"/>
</dbReference>
<dbReference type="Pfam" id="PF01399">
    <property type="entry name" value="PCI"/>
    <property type="match status" value="1"/>
</dbReference>
<dbReference type="SMART" id="SM00088">
    <property type="entry name" value="PINT"/>
    <property type="match status" value="1"/>
</dbReference>
<dbReference type="SUPFAM" id="SSF46785">
    <property type="entry name" value="Winged helix' DNA-binding domain"/>
    <property type="match status" value="1"/>
</dbReference>
<dbReference type="PROSITE" id="PS50250">
    <property type="entry name" value="PCI"/>
    <property type="match status" value="1"/>
</dbReference>
<keyword id="KW-0007">Acetylation</keyword>
<keyword id="KW-0963">Cytoplasm</keyword>
<keyword id="KW-0396">Initiation factor</keyword>
<keyword id="KW-0597">Phosphoprotein</keyword>
<keyword id="KW-0648">Protein biosynthesis</keyword>
<keyword id="KW-1267">Proteomics identification</keyword>
<keyword id="KW-1185">Reference proteome</keyword>
<proteinExistence type="evidence at protein level"/>
<organism>
    <name type="scientific">Homo sapiens</name>
    <name type="common">Human</name>
    <dbReference type="NCBI Taxonomy" id="9606"/>
    <lineage>
        <taxon>Eukaryota</taxon>
        <taxon>Metazoa</taxon>
        <taxon>Chordata</taxon>
        <taxon>Craniata</taxon>
        <taxon>Vertebrata</taxon>
        <taxon>Euteleostomi</taxon>
        <taxon>Mammalia</taxon>
        <taxon>Eutheria</taxon>
        <taxon>Euarchontoglires</taxon>
        <taxon>Primates</taxon>
        <taxon>Haplorrhini</taxon>
        <taxon>Catarrhini</taxon>
        <taxon>Hominidae</taxon>
        <taxon>Homo</taxon>
    </lineage>
</organism>
<reference key="1">
    <citation type="journal article" date="2004" name="Nature">
        <title>The sequence and analysis of duplication-rich human chromosome 16.</title>
        <authorList>
            <person name="Martin J."/>
            <person name="Han C."/>
            <person name="Gordon L.A."/>
            <person name="Terry A."/>
            <person name="Prabhakar S."/>
            <person name="She X."/>
            <person name="Xie G."/>
            <person name="Hellsten U."/>
            <person name="Chan Y.M."/>
            <person name="Altherr M."/>
            <person name="Couronne O."/>
            <person name="Aerts A."/>
            <person name="Bajorek E."/>
            <person name="Black S."/>
            <person name="Blumer H."/>
            <person name="Branscomb E."/>
            <person name="Brown N.C."/>
            <person name="Bruno W.J."/>
            <person name="Buckingham J.M."/>
            <person name="Callen D.F."/>
            <person name="Campbell C.S."/>
            <person name="Campbell M.L."/>
            <person name="Campbell E.W."/>
            <person name="Caoile C."/>
            <person name="Challacombe J.F."/>
            <person name="Chasteen L.A."/>
            <person name="Chertkov O."/>
            <person name="Chi H.C."/>
            <person name="Christensen M."/>
            <person name="Clark L.M."/>
            <person name="Cohn J.D."/>
            <person name="Denys M."/>
            <person name="Detter J.C."/>
            <person name="Dickson M."/>
            <person name="Dimitrijevic-Bussod M."/>
            <person name="Escobar J."/>
            <person name="Fawcett J.J."/>
            <person name="Flowers D."/>
            <person name="Fotopulos D."/>
            <person name="Glavina T."/>
            <person name="Gomez M."/>
            <person name="Gonzales E."/>
            <person name="Goodstein D."/>
            <person name="Goodwin L.A."/>
            <person name="Grady D.L."/>
            <person name="Grigoriev I."/>
            <person name="Groza M."/>
            <person name="Hammon N."/>
            <person name="Hawkins T."/>
            <person name="Haydu L."/>
            <person name="Hildebrand C.E."/>
            <person name="Huang W."/>
            <person name="Israni S."/>
            <person name="Jett J."/>
            <person name="Jewett P.B."/>
            <person name="Kadner K."/>
            <person name="Kimball H."/>
            <person name="Kobayashi A."/>
            <person name="Krawczyk M.-C."/>
            <person name="Leyba T."/>
            <person name="Longmire J.L."/>
            <person name="Lopez F."/>
            <person name="Lou Y."/>
            <person name="Lowry S."/>
            <person name="Ludeman T."/>
            <person name="Manohar C.F."/>
            <person name="Mark G.A."/>
            <person name="McMurray K.L."/>
            <person name="Meincke L.J."/>
            <person name="Morgan J."/>
            <person name="Moyzis R.K."/>
            <person name="Mundt M.O."/>
            <person name="Munk A.C."/>
            <person name="Nandkeshwar R.D."/>
            <person name="Pitluck S."/>
            <person name="Pollard M."/>
            <person name="Predki P."/>
            <person name="Parson-Quintana B."/>
            <person name="Ramirez L."/>
            <person name="Rash S."/>
            <person name="Retterer J."/>
            <person name="Ricke D.O."/>
            <person name="Robinson D.L."/>
            <person name="Rodriguez A."/>
            <person name="Salamov A."/>
            <person name="Saunders E.H."/>
            <person name="Scott D."/>
            <person name="Shough T."/>
            <person name="Stallings R.L."/>
            <person name="Stalvey M."/>
            <person name="Sutherland R.D."/>
            <person name="Tapia R."/>
            <person name="Tesmer J.G."/>
            <person name="Thayer N."/>
            <person name="Thompson L.S."/>
            <person name="Tice H."/>
            <person name="Torney D.C."/>
            <person name="Tran-Gyamfi M."/>
            <person name="Tsai M."/>
            <person name="Ulanovsky L.E."/>
            <person name="Ustaszewska A."/>
            <person name="Vo N."/>
            <person name="White P.S."/>
            <person name="Williams A.L."/>
            <person name="Wills P.L."/>
            <person name="Wu J.-R."/>
            <person name="Wu K."/>
            <person name="Yang J."/>
            <person name="DeJong P."/>
            <person name="Bruce D."/>
            <person name="Doggett N.A."/>
            <person name="Deaven L."/>
            <person name="Schmutz J."/>
            <person name="Grimwood J."/>
            <person name="Richardson P."/>
            <person name="Rokhsar D.S."/>
            <person name="Eichler E.E."/>
            <person name="Gilna P."/>
            <person name="Lucas S.M."/>
            <person name="Myers R.M."/>
            <person name="Rubin E.M."/>
            <person name="Pennacchio L.A."/>
        </authorList>
    </citation>
    <scope>NUCLEOTIDE SEQUENCE [LARGE SCALE GENOMIC DNA]</scope>
</reference>
<feature type="chain" id="PRO_0000422825" description="Eukaryotic translation initiation factor 3 subunit C-like protein">
    <location>
        <begin position="1"/>
        <end position="914"/>
    </location>
</feature>
<feature type="domain" description="PCI" evidence="3">
    <location>
        <begin position="674"/>
        <end position="850"/>
    </location>
</feature>
<feature type="region of interest" description="Disordered" evidence="4">
    <location>
        <begin position="1"/>
        <end position="44"/>
    </location>
</feature>
<feature type="region of interest" description="Disordered" evidence="4">
    <location>
        <begin position="157"/>
        <end position="302"/>
    </location>
</feature>
<feature type="region of interest" description="Disordered" evidence="4">
    <location>
        <begin position="523"/>
        <end position="543"/>
    </location>
</feature>
<feature type="region of interest" description="Disordered" evidence="4">
    <location>
        <begin position="886"/>
        <end position="914"/>
    </location>
</feature>
<feature type="compositionally biased region" description="Low complexity" evidence="4">
    <location>
        <begin position="8"/>
        <end position="21"/>
    </location>
</feature>
<feature type="compositionally biased region" description="Acidic residues" evidence="4">
    <location>
        <begin position="166"/>
        <end position="190"/>
    </location>
</feature>
<feature type="compositionally biased region" description="Basic and acidic residues" evidence="4">
    <location>
        <begin position="199"/>
        <end position="216"/>
    </location>
</feature>
<feature type="compositionally biased region" description="Acidic residues" evidence="4">
    <location>
        <begin position="217"/>
        <end position="232"/>
    </location>
</feature>
<feature type="compositionally biased region" description="Basic and acidic residues" evidence="4">
    <location>
        <begin position="261"/>
        <end position="278"/>
    </location>
</feature>
<feature type="compositionally biased region" description="Acidic residues" evidence="4">
    <location>
        <begin position="291"/>
        <end position="300"/>
    </location>
</feature>
<feature type="compositionally biased region" description="Polar residues" evidence="4">
    <location>
        <begin position="523"/>
        <end position="532"/>
    </location>
</feature>
<feature type="compositionally biased region" description="Basic and acidic residues" evidence="4">
    <location>
        <begin position="887"/>
        <end position="900"/>
    </location>
</feature>
<feature type="modified residue" description="Phosphoserine" evidence="2">
    <location>
        <position position="9"/>
    </location>
</feature>
<feature type="modified residue" description="Phosphoserine" evidence="2">
    <location>
        <position position="11"/>
    </location>
</feature>
<feature type="modified residue" description="Phosphoserine" evidence="2">
    <location>
        <position position="13"/>
    </location>
</feature>
<feature type="modified residue" description="Phosphoserine" evidence="2">
    <location>
        <position position="15"/>
    </location>
</feature>
<feature type="modified residue" description="Phosphoserine" evidence="2">
    <location>
        <position position="16"/>
    </location>
</feature>
<feature type="modified residue" description="Phosphoserine" evidence="2">
    <location>
        <position position="18"/>
    </location>
</feature>
<feature type="modified residue" description="Phosphoserine" evidence="2">
    <location>
        <position position="39"/>
    </location>
</feature>
<feature type="modified residue" description="N6-acetyllysine" evidence="1">
    <location>
        <position position="99"/>
    </location>
</feature>
<feature type="modified residue" description="Phosphoserine" evidence="2">
    <location>
        <position position="166"/>
    </location>
</feature>
<feature type="modified residue" description="Phosphoserine" evidence="1">
    <location>
        <position position="178"/>
    </location>
</feature>
<feature type="modified residue" description="Phosphoserine" evidence="1">
    <location>
        <position position="181"/>
    </location>
</feature>
<feature type="modified residue" description="Phosphoserine" evidence="1">
    <location>
        <position position="182"/>
    </location>
</feature>
<feature type="modified residue" description="Phosphothreonine" evidence="2">
    <location>
        <position position="525"/>
    </location>
</feature>
<feature type="modified residue" description="N6-acetyllysine" evidence="1">
    <location>
        <position position="644"/>
    </location>
</feature>
<feature type="modified residue" description="Phosphoserine" evidence="2">
    <location>
        <position position="910"/>
    </location>
</feature>
<name>EIFCL_HUMAN</name>
<evidence type="ECO:0000250" key="1">
    <source>
        <dbReference type="UniProtKB" id="Q8R1B4"/>
    </source>
</evidence>
<evidence type="ECO:0000250" key="2">
    <source>
        <dbReference type="UniProtKB" id="Q99613"/>
    </source>
</evidence>
<evidence type="ECO:0000255" key="3">
    <source>
        <dbReference type="PROSITE-ProRule" id="PRU01185"/>
    </source>
</evidence>
<evidence type="ECO:0000256" key="4">
    <source>
        <dbReference type="SAM" id="MobiDB-lite"/>
    </source>
</evidence>
<evidence type="ECO:0000305" key="5"/>
<sequence length="914" mass="105473">MSRFFTTGSDSESESSLSGEELVTKPVGGNYGKQPLLLSEDEEDTKRVVRSAKDKRFEELTNLIRTIRNAMKIRDVTKCLEEFELLGKAYGKAKSIVDKEGVPRFYIRILADLEDYLNELWEDKEGKKKMNKNNAKALSTLRQKIRKYNRDFESHITSYKQNPEQSADEDAEKNEEDSEGSSDEDEDEDGVSAATFLKKKSEAPSGESRKFLKKMDDEDEDSEDSEDDEDWDTGSTSSDSDSEEEEGKQTALASRFLKKAPTTDEDKKAAEKKREDKAKKKHDRKSKRLDEEEEEDNEGGEWERVRGGVPLVKEKPKMFAKGTEITHAVVIKKLNEILQARGKKGTDRAAQIELLQLLVQIAAENNLGEGVIVKIKFNIIASLYDYNPNLATYMKPEMWGKCLDCINELMDILFANPNIFVGENILEESENLHNADQPLRVRGCILTLVERMDEEFTKIMQNTDPHSQEYVEHLKDEAQVCAIIERVQRYLEEKGTTEEVCRIYLLRILHTYYKFDYKAHQRQLTPPEGSSKSEQDQAENEGEDSAVLMERLCKYIYAKDRTDRIRTCAILCHIYHHALHSRWYQARDLMLMSHLQDNIQHADPPVQILYNRTMVQLGICAFRQGLTKDAHNALLDIQSSGRAKELLGQGLLLRSLQERNQEQEKVERRRQVPFHLHINLELLECVYLVSAMLLEIPYMAAHESDARRRMISKQFHHQLRVGERQPLLGPPESMREHVVAASKAMKMGDWKTCHSFIINEKMNGKVWDLFPEADKVRTMLVRKIQEESLRTYLFTYSSVYDSISMETLSDMFELDLPTVHSIISKMIINEELMASLDQPTQTVVMHRTEPTAQQNLALQLAEKLGSLVENNERVFDHKQGTYGGYFRDQKDGYRKNEGYMRRGGYRQQQSQTAY</sequence>